<protein>
    <recommendedName>
        <fullName>IQ motif and ubiquitin-like domain-containing protein</fullName>
    </recommendedName>
</protein>
<proteinExistence type="evidence at protein level"/>
<reference key="1">
    <citation type="journal article" date="2004" name="Nat. Genet.">
        <title>Complete sequencing and characterization of 21,243 full-length human cDNAs.</title>
        <authorList>
            <person name="Ota T."/>
            <person name="Suzuki Y."/>
            <person name="Nishikawa T."/>
            <person name="Otsuki T."/>
            <person name="Sugiyama T."/>
            <person name="Irie R."/>
            <person name="Wakamatsu A."/>
            <person name="Hayashi K."/>
            <person name="Sato H."/>
            <person name="Nagai K."/>
            <person name="Kimura K."/>
            <person name="Makita H."/>
            <person name="Sekine M."/>
            <person name="Obayashi M."/>
            <person name="Nishi T."/>
            <person name="Shibahara T."/>
            <person name="Tanaka T."/>
            <person name="Ishii S."/>
            <person name="Yamamoto J."/>
            <person name="Saito K."/>
            <person name="Kawai Y."/>
            <person name="Isono Y."/>
            <person name="Nakamura Y."/>
            <person name="Nagahari K."/>
            <person name="Murakami K."/>
            <person name="Yasuda T."/>
            <person name="Iwayanagi T."/>
            <person name="Wagatsuma M."/>
            <person name="Shiratori A."/>
            <person name="Sudo H."/>
            <person name="Hosoiri T."/>
            <person name="Kaku Y."/>
            <person name="Kodaira H."/>
            <person name="Kondo H."/>
            <person name="Sugawara M."/>
            <person name="Takahashi M."/>
            <person name="Kanda K."/>
            <person name="Yokoi T."/>
            <person name="Furuya T."/>
            <person name="Kikkawa E."/>
            <person name="Omura Y."/>
            <person name="Abe K."/>
            <person name="Kamihara K."/>
            <person name="Katsuta N."/>
            <person name="Sato K."/>
            <person name="Tanikawa M."/>
            <person name="Yamazaki M."/>
            <person name="Ninomiya K."/>
            <person name="Ishibashi T."/>
            <person name="Yamashita H."/>
            <person name="Murakawa K."/>
            <person name="Fujimori K."/>
            <person name="Tanai H."/>
            <person name="Kimata M."/>
            <person name="Watanabe M."/>
            <person name="Hiraoka S."/>
            <person name="Chiba Y."/>
            <person name="Ishida S."/>
            <person name="Ono Y."/>
            <person name="Takiguchi S."/>
            <person name="Watanabe S."/>
            <person name="Yosida M."/>
            <person name="Hotuta T."/>
            <person name="Kusano J."/>
            <person name="Kanehori K."/>
            <person name="Takahashi-Fujii A."/>
            <person name="Hara H."/>
            <person name="Tanase T.-O."/>
            <person name="Nomura Y."/>
            <person name="Togiya S."/>
            <person name="Komai F."/>
            <person name="Hara R."/>
            <person name="Takeuchi K."/>
            <person name="Arita M."/>
            <person name="Imose N."/>
            <person name="Musashino K."/>
            <person name="Yuuki H."/>
            <person name="Oshima A."/>
            <person name="Sasaki N."/>
            <person name="Aotsuka S."/>
            <person name="Yoshikawa Y."/>
            <person name="Matsunawa H."/>
            <person name="Ichihara T."/>
            <person name="Shiohata N."/>
            <person name="Sano S."/>
            <person name="Moriya S."/>
            <person name="Momiyama H."/>
            <person name="Satoh N."/>
            <person name="Takami S."/>
            <person name="Terashima Y."/>
            <person name="Suzuki O."/>
            <person name="Nakagawa S."/>
            <person name="Senoh A."/>
            <person name="Mizoguchi H."/>
            <person name="Goto Y."/>
            <person name="Shimizu F."/>
            <person name="Wakebe H."/>
            <person name="Hishigaki H."/>
            <person name="Watanabe T."/>
            <person name="Sugiyama A."/>
            <person name="Takemoto M."/>
            <person name="Kawakami B."/>
            <person name="Yamazaki M."/>
            <person name="Watanabe K."/>
            <person name="Kumagai A."/>
            <person name="Itakura S."/>
            <person name="Fukuzumi Y."/>
            <person name="Fujimori Y."/>
            <person name="Komiyama M."/>
            <person name="Tashiro H."/>
            <person name="Tanigami A."/>
            <person name="Fujiwara T."/>
            <person name="Ono T."/>
            <person name="Yamada K."/>
            <person name="Fujii Y."/>
            <person name="Ozaki K."/>
            <person name="Hirao M."/>
            <person name="Ohmori Y."/>
            <person name="Kawabata A."/>
            <person name="Hikiji T."/>
            <person name="Kobatake N."/>
            <person name="Inagaki H."/>
            <person name="Ikema Y."/>
            <person name="Okamoto S."/>
            <person name="Okitani R."/>
            <person name="Kawakami T."/>
            <person name="Noguchi S."/>
            <person name="Itoh T."/>
            <person name="Shigeta K."/>
            <person name="Senba T."/>
            <person name="Matsumura K."/>
            <person name="Nakajima Y."/>
            <person name="Mizuno T."/>
            <person name="Morinaga M."/>
            <person name="Sasaki M."/>
            <person name="Togashi T."/>
            <person name="Oyama M."/>
            <person name="Hata H."/>
            <person name="Watanabe M."/>
            <person name="Komatsu T."/>
            <person name="Mizushima-Sugano J."/>
            <person name="Satoh T."/>
            <person name="Shirai Y."/>
            <person name="Takahashi Y."/>
            <person name="Nakagawa K."/>
            <person name="Okumura K."/>
            <person name="Nagase T."/>
            <person name="Nomura N."/>
            <person name="Kikuchi H."/>
            <person name="Masuho Y."/>
            <person name="Yamashita R."/>
            <person name="Nakai K."/>
            <person name="Yada T."/>
            <person name="Nakamura Y."/>
            <person name="Ohara O."/>
            <person name="Isogai T."/>
            <person name="Sugano S."/>
        </authorList>
    </citation>
    <scope>NUCLEOTIDE SEQUENCE [LARGE SCALE MRNA] (ISOFORM 1)</scope>
    <source>
        <tissue>Testis</tissue>
    </source>
</reference>
<reference key="2">
    <citation type="journal article" date="2003" name="Science">
        <title>Human chromosome 7: DNA sequence and biology.</title>
        <authorList>
            <person name="Scherer S.W."/>
            <person name="Cheung J."/>
            <person name="MacDonald J.R."/>
            <person name="Osborne L.R."/>
            <person name="Nakabayashi K."/>
            <person name="Herbrick J.-A."/>
            <person name="Carson A.R."/>
            <person name="Parker-Katiraee L."/>
            <person name="Skaug J."/>
            <person name="Khaja R."/>
            <person name="Zhang J."/>
            <person name="Hudek A.K."/>
            <person name="Li M."/>
            <person name="Haddad M."/>
            <person name="Duggan G.E."/>
            <person name="Fernandez B.A."/>
            <person name="Kanematsu E."/>
            <person name="Gentles S."/>
            <person name="Christopoulos C.C."/>
            <person name="Choufani S."/>
            <person name="Kwasnicka D."/>
            <person name="Zheng X.H."/>
            <person name="Lai Z."/>
            <person name="Nusskern D.R."/>
            <person name="Zhang Q."/>
            <person name="Gu Z."/>
            <person name="Lu F."/>
            <person name="Zeesman S."/>
            <person name="Nowaczyk M.J."/>
            <person name="Teshima I."/>
            <person name="Chitayat D."/>
            <person name="Shuman C."/>
            <person name="Weksberg R."/>
            <person name="Zackai E.H."/>
            <person name="Grebe T.A."/>
            <person name="Cox S.R."/>
            <person name="Kirkpatrick S.J."/>
            <person name="Rahman N."/>
            <person name="Friedman J.M."/>
            <person name="Heng H.H.Q."/>
            <person name="Pelicci P.G."/>
            <person name="Lo-Coco F."/>
            <person name="Belloni E."/>
            <person name="Shaffer L.G."/>
            <person name="Pober B."/>
            <person name="Morton C.C."/>
            <person name="Gusella J.F."/>
            <person name="Bruns G.A.P."/>
            <person name="Korf B.R."/>
            <person name="Quade B.J."/>
            <person name="Ligon A.H."/>
            <person name="Ferguson H."/>
            <person name="Higgins A.W."/>
            <person name="Leach N.T."/>
            <person name="Herrick S.R."/>
            <person name="Lemyre E."/>
            <person name="Farra C.G."/>
            <person name="Kim H.-G."/>
            <person name="Summers A.M."/>
            <person name="Gripp K.W."/>
            <person name="Roberts W."/>
            <person name="Szatmari P."/>
            <person name="Winsor E.J.T."/>
            <person name="Grzeschik K.-H."/>
            <person name="Teebi A."/>
            <person name="Minassian B.A."/>
            <person name="Kere J."/>
            <person name="Armengol L."/>
            <person name="Pujana M.A."/>
            <person name="Estivill X."/>
            <person name="Wilson M.D."/>
            <person name="Koop B.F."/>
            <person name="Tosi S."/>
            <person name="Moore G.E."/>
            <person name="Boright A.P."/>
            <person name="Zlotorynski E."/>
            <person name="Kerem B."/>
            <person name="Kroisel P.M."/>
            <person name="Petek E."/>
            <person name="Oscier D.G."/>
            <person name="Mould S.J."/>
            <person name="Doehner H."/>
            <person name="Doehner K."/>
            <person name="Rommens J.M."/>
            <person name="Vincent J.B."/>
            <person name="Venter J.C."/>
            <person name="Li P.W."/>
            <person name="Mural R.J."/>
            <person name="Adams M.D."/>
            <person name="Tsui L.-C."/>
        </authorList>
    </citation>
    <scope>NUCLEOTIDE SEQUENCE [LARGE SCALE GENOMIC DNA]</scope>
</reference>
<reference key="3">
    <citation type="journal article" date="2004" name="Genome Res.">
        <title>The status, quality, and expansion of the NIH full-length cDNA project: the Mammalian Gene Collection (MGC).</title>
        <authorList>
            <consortium name="The MGC Project Team"/>
        </authorList>
    </citation>
    <scope>NUCLEOTIDE SEQUENCE [LARGE SCALE MRNA] (ISOFORMS 1 AND 2)</scope>
    <scope>VARIANT MET-126</scope>
    <source>
        <tissue>Testis</tissue>
    </source>
</reference>
<reference key="4">
    <citation type="journal article" date="2018" name="PLoS Genet.">
        <title>ZMYND10 stabilizes intermediate chain proteins in the cytoplasmic pre-assembly of dynein arms.</title>
        <authorList>
            <person name="Cho K.J."/>
            <person name="Noh S.H."/>
            <person name="Han S.M."/>
            <person name="Choi W.I."/>
            <person name="Kim H.Y."/>
            <person name="Yu S."/>
            <person name="Lee J.S."/>
            <person name="Rim J.H."/>
            <person name="Lee M.G."/>
            <person name="Hildebrandt F."/>
            <person name="Gee H.Y."/>
        </authorList>
    </citation>
    <scope>INTERACTION WITH ZMYND10</scope>
</reference>
<reference key="5">
    <citation type="submission" date="2006-06" db="PDB data bank">
        <title>Solution structure of the novel identified ubiquitin-like domain in the human hypothetical protein FLJ35834.</title>
        <authorList>
            <consortium name="RIKEN structural genomics initiative (RSGI)"/>
        </authorList>
    </citation>
    <scope>STRUCTURE BY NMR OF 121-227</scope>
</reference>
<reference key="6">
    <citation type="journal article" date="2006" name="Science">
        <title>The consensus coding sequences of human breast and colorectal cancers.</title>
        <authorList>
            <person name="Sjoeblom T."/>
            <person name="Jones S."/>
            <person name="Wood L.D."/>
            <person name="Parsons D.W."/>
            <person name="Lin J."/>
            <person name="Barber T.D."/>
            <person name="Mandelker D."/>
            <person name="Leary R.J."/>
            <person name="Ptak J."/>
            <person name="Silliman N."/>
            <person name="Szabo S."/>
            <person name="Buckhaults P."/>
            <person name="Farrell C."/>
            <person name="Meeh P."/>
            <person name="Markowitz S.D."/>
            <person name="Willis J."/>
            <person name="Dawson D."/>
            <person name="Willson J.K.V."/>
            <person name="Gazdar A.F."/>
            <person name="Hartigan J."/>
            <person name="Wu L."/>
            <person name="Liu C."/>
            <person name="Parmigiani G."/>
            <person name="Park B.H."/>
            <person name="Bachman K.E."/>
            <person name="Papadopoulos N."/>
            <person name="Vogelstein B."/>
            <person name="Kinzler K.W."/>
            <person name="Velculescu V.E."/>
        </authorList>
    </citation>
    <scope>VARIANT [LARGE SCALE ANALYSIS] HIS-735</scope>
</reference>
<reference key="7">
    <citation type="journal article" date="2022" name="Hum. Reprod.">
        <title>IQUB deficiency causes male infertility by affecting the activity of p-ERK1/2/RSPH3.</title>
        <authorList>
            <person name="Zhang Z."/>
            <person name="Zhou H."/>
            <person name="Deng X."/>
            <person name="Zhang R."/>
            <person name="Qu R."/>
            <person name="Mu J."/>
            <person name="Liu R."/>
            <person name="Zeng Y."/>
            <person name="Chen B."/>
            <person name="Wang L."/>
            <person name="Sang Q."/>
            <person name="Bao S."/>
        </authorList>
    </citation>
    <scope>VARIANT 314-TYR--HIS-791 DEL</scope>
    <scope>FUNCTION</scope>
    <scope>INTERACTION WITH RSPH3 AND CALMODULIN</scope>
    <scope>INVOLVEMENT IN SPERMATOGENIC FAILURE WITH RADIAL SPOKE DEFECTS</scope>
</reference>
<accession>Q8NA54</accession>
<accession>A4D0X0</accession>
<accession>Q49AL6</accession>
<accession>Q4G189</accession>
<accession>Q5BJD9</accession>
<accession>Q6NUH6</accession>
<accession>Q8N9Y2</accession>
<comment type="function">
    <text evidence="1 7">Adapter protein that anchors the radial spoke 1 (RS1) complex to the A microtubule of outer doublet microtubules in axonemes (PubMed:36355624). The triple radial spokes (RS1, RS2 and RS3) are required to modulate beating of the sperm flagellum (PubMed:36355624). May play a role in inhibiting signaling via MAPK1/ERK2 and MAPK3/ERK1 (PubMed:36355624). Additionally, may play a role in the functioning of cilia (By similarity). Not required for the functioning of tracheal or ependymal cilia (By similarity).</text>
</comment>
<comment type="subunit">
    <text evidence="1 6 7">Component of the axonemal radial spoke 1 (RS1) complex, at least composed of spoke head proteins RSPH1, RSPH3, RSPH9 and the cilia-specific component RSPH4A or sperm-specific component RSPH6A, spoke stalk proteins RSPH14, DNAJB13, DYDC1, ROPN1L and NME5, and the anchor protein IQUB (By similarity). Does not appear to be part of radial spoke complexes 2 or 3 (RS2 or RS3) (By similarity). Interacts with CALM1 (By similarity). Interacts with DNAJB13 (By similarity). Interacts with DYNLL2 (By similarity). Interacts with NME5 (By similarity). Interacts with RSPH3 (PubMed:36355624). Interacts with RSPH9 (By similarity). Interacts with ZMYND10 (PubMed:29601588). Interacts with calmodulin; the interaction occurs in conditions of low but not high calcium (PubMed:36355624).</text>
</comment>
<comment type="interaction">
    <interactant intactId="EBI-10220600">
        <id>Q8NA54</id>
    </interactant>
    <interactant intactId="EBI-11317841">
        <id>Q9H161</id>
        <label>ALX4</label>
    </interactant>
    <organismsDiffer>false</organismsDiffer>
    <experiments>3</experiments>
</comment>
<comment type="interaction">
    <interactant intactId="EBI-10220600">
        <id>Q8NA54</id>
    </interactant>
    <interactant intactId="EBI-12224467">
        <id>Q9NYG5-2</id>
        <label>ANAPC11</label>
    </interactant>
    <organismsDiffer>false</organismsDiffer>
    <experiments>3</experiments>
</comment>
<comment type="interaction">
    <interactant intactId="EBI-10220600">
        <id>Q8NA54</id>
    </interactant>
    <interactant intactId="EBI-5661893">
        <id>Q86SG2</id>
        <label>ANKRD23</label>
    </interactant>
    <organismsDiffer>false</organismsDiffer>
    <experiments>3</experiments>
</comment>
<comment type="interaction">
    <interactant intactId="EBI-10220600">
        <id>Q8NA54</id>
    </interactant>
    <interactant intactId="EBI-2548012">
        <id>Q9H2G9</id>
        <label>BLZF1</label>
    </interactant>
    <organismsDiffer>false</organismsDiffer>
    <experiments>6</experiments>
</comment>
<comment type="interaction">
    <interactant intactId="EBI-10220600">
        <id>Q8NA54</id>
    </interactant>
    <interactant intactId="EBI-739580">
        <id>Q13137</id>
        <label>CALCOCO2</label>
    </interactant>
    <organismsDiffer>false</organismsDiffer>
    <experiments>3</experiments>
</comment>
<comment type="interaction">
    <interactant intactId="EBI-10220600">
        <id>Q8NA54</id>
    </interactant>
    <interactant intactId="EBI-739624">
        <id>Q8NHQ1</id>
        <label>CEP70</label>
    </interactant>
    <organismsDiffer>false</organismsDiffer>
    <experiments>3</experiments>
</comment>
<comment type="interaction">
    <interactant intactId="EBI-10220600">
        <id>Q8NA54</id>
    </interactant>
    <interactant intactId="EBI-742887">
        <id>Q8TAP6</id>
        <label>CEP76</label>
    </interactant>
    <organismsDiffer>false</organismsDiffer>
    <experiments>3</experiments>
</comment>
<comment type="interaction">
    <interactant intactId="EBI-10220600">
        <id>Q8NA54</id>
    </interactant>
    <interactant intactId="EBI-25837549">
        <id>P28329-3</id>
        <label>CHAT</label>
    </interactant>
    <organismsDiffer>false</organismsDiffer>
    <experiments>3</experiments>
</comment>
<comment type="interaction">
    <interactant intactId="EBI-10220600">
        <id>Q8NA54</id>
    </interactant>
    <interactant intactId="EBI-21553822">
        <id>Q96A83-2</id>
        <label>COL26A1</label>
    </interactant>
    <organismsDiffer>false</organismsDiffer>
    <experiments>3</experiments>
</comment>
<comment type="interaction">
    <interactant intactId="EBI-10220600">
        <id>Q8NA54</id>
    </interactant>
    <interactant intactId="EBI-3867333">
        <id>A8MQ03</id>
        <label>CYSRT1</label>
    </interactant>
    <organismsDiffer>false</organismsDiffer>
    <experiments>3</experiments>
</comment>
<comment type="interaction">
    <interactant intactId="EBI-10220600">
        <id>Q8NA54</id>
    </interactant>
    <interactant intactId="EBI-12019962">
        <id>Q14689-4</id>
        <label>DIP2A</label>
    </interactant>
    <organismsDiffer>false</organismsDiffer>
    <experiments>3</experiments>
</comment>
<comment type="interaction">
    <interactant intactId="EBI-10220600">
        <id>Q8NA54</id>
    </interactant>
    <interactant intactId="EBI-12593112">
        <id>O75190-2</id>
        <label>DNAJB6</label>
    </interactant>
    <organismsDiffer>false</organismsDiffer>
    <experiments>3</experiments>
</comment>
<comment type="interaction">
    <interactant intactId="EBI-10220600">
        <id>Q8NA54</id>
    </interactant>
    <interactant intactId="EBI-395638">
        <id>O14645</id>
        <label>DNALI1</label>
    </interactant>
    <organismsDiffer>false</organismsDiffer>
    <experiments>3</experiments>
</comment>
<comment type="interaction">
    <interactant intactId="EBI-10220600">
        <id>Q8NA54</id>
    </interactant>
    <interactant intactId="EBI-10968534">
        <id>P50570-2</id>
        <label>DNM2</label>
    </interactant>
    <organismsDiffer>false</organismsDiffer>
    <experiments>3</experiments>
</comment>
<comment type="interaction">
    <interactant intactId="EBI-10220600">
        <id>Q8NA54</id>
    </interactant>
    <interactant intactId="EBI-349105">
        <id>P63167</id>
        <label>DYNLL1</label>
    </interactant>
    <organismsDiffer>false</organismsDiffer>
    <experiments>3</experiments>
</comment>
<comment type="interaction">
    <interactant intactId="EBI-10220600">
        <id>Q8NA54</id>
    </interactant>
    <interactant intactId="EBI-12807776">
        <id>O00167-2</id>
        <label>EYA2</label>
    </interactant>
    <organismsDiffer>false</organismsDiffer>
    <experiments>3</experiments>
</comment>
<comment type="interaction">
    <interactant intactId="EBI-10220600">
        <id>Q8NA54</id>
    </interactant>
    <interactant intactId="EBI-348399">
        <id>P22607</id>
        <label>FGFR3</label>
    </interactant>
    <organismsDiffer>false</organismsDiffer>
    <experiments>3</experiments>
</comment>
<comment type="interaction">
    <interactant intactId="EBI-10220600">
        <id>Q8NA54</id>
    </interactant>
    <interactant intactId="EBI-11110431">
        <id>Q8TB36</id>
        <label>GDAP1</label>
    </interactant>
    <organismsDiffer>false</organismsDiffer>
    <experiments>3</experiments>
</comment>
<comment type="interaction">
    <interactant intactId="EBI-10220600">
        <id>Q8NA54</id>
    </interactant>
    <interactant intactId="EBI-744302">
        <id>P14136</id>
        <label>GFAP</label>
    </interactant>
    <organismsDiffer>false</organismsDiffer>
    <experiments>3</experiments>
</comment>
<comment type="interaction">
    <interactant intactId="EBI-10220600">
        <id>Q8NA54</id>
    </interactant>
    <interactant intactId="EBI-618309">
        <id>Q08379</id>
        <label>GOLGA2</label>
    </interactant>
    <organismsDiffer>false</organismsDiffer>
    <experiments>3</experiments>
</comment>
<comment type="interaction">
    <interactant intactId="EBI-10220600">
        <id>Q8NA54</id>
    </interactant>
    <interactant intactId="EBI-11519926">
        <id>Q6PI77</id>
        <label>GPRASP3</label>
    </interactant>
    <organismsDiffer>false</organismsDiffer>
    <experiments>3</experiments>
</comment>
<comment type="interaction">
    <interactant intactId="EBI-10220600">
        <id>Q8NA54</id>
    </interactant>
    <interactant intactId="EBI-351506">
        <id>P06396</id>
        <label>GSN</label>
    </interactant>
    <organismsDiffer>false</organismsDiffer>
    <experiments>3</experiments>
</comment>
<comment type="interaction">
    <interactant intactId="EBI-10220600">
        <id>Q8NA54</id>
    </interactant>
    <interactant intactId="EBI-350145">
        <id>P01112</id>
        <label>HRAS</label>
    </interactant>
    <organismsDiffer>false</organismsDiffer>
    <experiments>3</experiments>
</comment>
<comment type="interaction">
    <interactant intactId="EBI-10220600">
        <id>Q8NA54</id>
    </interactant>
    <interactant intactId="EBI-352682">
        <id>P04792</id>
        <label>HSPB1</label>
    </interactant>
    <organismsDiffer>false</organismsDiffer>
    <experiments>3</experiments>
</comment>
<comment type="interaction">
    <interactant intactId="EBI-10220600">
        <id>Q8NA54</id>
    </interactant>
    <interactant intactId="EBI-8638439">
        <id>Q8IYA8</id>
        <label>IHO1</label>
    </interactant>
    <organismsDiffer>false</organismsDiffer>
    <experiments>4</experiments>
</comment>
<comment type="interaction">
    <interactant intactId="EBI-10220600">
        <id>Q8NA54</id>
    </interactant>
    <interactant intactId="EBI-1055254">
        <id>Q8WXH2</id>
        <label>JPH3</label>
    </interactant>
    <organismsDiffer>false</organismsDiffer>
    <experiments>3</experiments>
</comment>
<comment type="interaction">
    <interactant intactId="EBI-10220600">
        <id>Q8NA54</id>
    </interactant>
    <interactant intactId="EBI-743591">
        <id>Q9BW62</id>
        <label>KATNAL1</label>
    </interactant>
    <organismsDiffer>false</organismsDiffer>
    <experiments>3</experiments>
</comment>
<comment type="interaction">
    <interactant intactId="EBI-10220600">
        <id>Q8NA54</id>
    </interactant>
    <interactant intactId="EBI-10975473">
        <id>O60333-2</id>
        <label>KIF1B</label>
    </interactant>
    <organismsDiffer>false</organismsDiffer>
    <experiments>3</experiments>
</comment>
<comment type="interaction">
    <interactant intactId="EBI-10220600">
        <id>Q8NA54</id>
    </interactant>
    <interactant intactId="EBI-14069005">
        <id>Q9BVG8-5</id>
        <label>KIFC3</label>
    </interactant>
    <organismsDiffer>false</organismsDiffer>
    <experiments>3</experiments>
</comment>
<comment type="interaction">
    <interactant intactId="EBI-10220600">
        <id>Q8NA54</id>
    </interactant>
    <interactant intactId="EBI-948266">
        <id>O14901</id>
        <label>KLF11</label>
    </interactant>
    <organismsDiffer>false</organismsDiffer>
    <experiments>3</experiments>
</comment>
<comment type="interaction">
    <interactant intactId="EBI-10220600">
        <id>Q8NA54</id>
    </interactant>
    <interactant intactId="EBI-10171697">
        <id>Q6A162</id>
        <label>KRT40</label>
    </interactant>
    <organismsDiffer>false</organismsDiffer>
    <experiments>3</experiments>
</comment>
<comment type="interaction">
    <interactant intactId="EBI-10220600">
        <id>Q8NA54</id>
    </interactant>
    <interactant intactId="EBI-2949715">
        <id>O95678</id>
        <label>KRT75</label>
    </interactant>
    <organismsDiffer>false</organismsDiffer>
    <experiments>3</experiments>
</comment>
<comment type="interaction">
    <interactant intactId="EBI-10220600">
        <id>Q8NA54</id>
    </interactant>
    <interactant intactId="EBI-2952745">
        <id>Q01546</id>
        <label>KRT76</label>
    </interactant>
    <organismsDiffer>false</organismsDiffer>
    <experiments>3</experiments>
</comment>
<comment type="interaction">
    <interactant intactId="EBI-10220600">
        <id>Q8NA54</id>
    </interactant>
    <interactant intactId="EBI-10172290">
        <id>P60409</id>
        <label>KRTAP10-7</label>
    </interactant>
    <organismsDiffer>false</organismsDiffer>
    <experiments>3</experiments>
</comment>
<comment type="interaction">
    <interactant intactId="EBI-10220600">
        <id>Q8NA54</id>
    </interactant>
    <interactant intactId="EBI-10172052">
        <id>P60411</id>
        <label>KRTAP10-9</label>
    </interactant>
    <organismsDiffer>false</organismsDiffer>
    <experiments>3</experiments>
</comment>
<comment type="interaction">
    <interactant intactId="EBI-10220600">
        <id>Q8NA54</id>
    </interactant>
    <interactant intactId="EBI-10176379">
        <id>P59991</id>
        <label>KRTAP12-2</label>
    </interactant>
    <organismsDiffer>false</organismsDiffer>
    <experiments>3</experiments>
</comment>
<comment type="interaction">
    <interactant intactId="EBI-10220600">
        <id>Q8NA54</id>
    </interactant>
    <interactant intactId="EBI-10176396">
        <id>P60329</id>
        <label>KRTAP12-4</label>
    </interactant>
    <organismsDiffer>false</organismsDiffer>
    <experiments>6</experiments>
</comment>
<comment type="interaction">
    <interactant intactId="EBI-10220600">
        <id>Q8NA54</id>
    </interactant>
    <interactant intactId="EBI-12039345">
        <id>Q9UBR4-2</id>
        <label>LHX3</label>
    </interactant>
    <organismsDiffer>false</organismsDiffer>
    <experiments>3</experiments>
</comment>
<comment type="interaction">
    <interactant intactId="EBI-10220600">
        <id>Q8NA54</id>
    </interactant>
    <interactant intactId="EBI-351935">
        <id>P02545</id>
        <label>LMNA</label>
    </interactant>
    <organismsDiffer>false</organismsDiffer>
    <experiments>3</experiments>
</comment>
<comment type="interaction">
    <interactant intactId="EBI-10220600">
        <id>Q8NA54</id>
    </interactant>
    <interactant intactId="EBI-1045155">
        <id>P43360</id>
        <label>MAGEA6</label>
    </interactant>
    <organismsDiffer>false</organismsDiffer>
    <experiments>3</experiments>
</comment>
<comment type="interaction">
    <interactant intactId="EBI-10220600">
        <id>Q8NA54</id>
    </interactant>
    <interactant intactId="EBI-724076">
        <id>Q99750</id>
        <label>MDFI</label>
    </interactant>
    <organismsDiffer>false</organismsDiffer>
    <experiments>3</experiments>
</comment>
<comment type="interaction">
    <interactant intactId="EBI-10220600">
        <id>Q8NA54</id>
    </interactant>
    <interactant intactId="EBI-11022007">
        <id>Q9HBE1-4</id>
        <label>PATZ1</label>
    </interactant>
    <organismsDiffer>false</organismsDiffer>
    <experiments>3</experiments>
</comment>
<comment type="interaction">
    <interactant intactId="EBI-10220600">
        <id>Q8NA54</id>
    </interactant>
    <interactant intactId="EBI-10232538">
        <id>Q8WWB5</id>
        <label>PIH1D2</label>
    </interactant>
    <organismsDiffer>false</organismsDiffer>
    <experiments>3</experiments>
</comment>
<comment type="interaction">
    <interactant intactId="EBI-10220600">
        <id>Q8NA54</id>
    </interactant>
    <interactant intactId="EBI-2880227">
        <id>Q9Y446</id>
        <label>PKP3</label>
    </interactant>
    <organismsDiffer>false</organismsDiffer>
    <experiments>3</experiments>
</comment>
<comment type="interaction">
    <interactant intactId="EBI-10220600">
        <id>Q8NA54</id>
    </interactant>
    <interactant intactId="EBI-12029004">
        <id>P78424</id>
        <label>POU6F2</label>
    </interactant>
    <organismsDiffer>false</organismsDiffer>
    <experiments>3</experiments>
</comment>
<comment type="interaction">
    <interactant intactId="EBI-10220600">
        <id>Q8NA54</id>
    </interactant>
    <interactant intactId="EBI-11320284">
        <id>Q9NQX0</id>
        <label>PRDM6</label>
    </interactant>
    <organismsDiffer>false</organismsDiffer>
    <experiments>3</experiments>
</comment>
<comment type="interaction">
    <interactant intactId="EBI-10220600">
        <id>Q8NA54</id>
    </interactant>
    <interactant intactId="EBI-21251460">
        <id>O60260-5</id>
        <label>PRKN</label>
    </interactant>
    <organismsDiffer>false</organismsDiffer>
    <experiments>3</experiments>
</comment>
<comment type="interaction">
    <interactant intactId="EBI-10220600">
        <id>Q8NA54</id>
    </interactant>
    <interactant intactId="EBI-23335840">
        <id>E9PI22</id>
        <label>PRR23D1</label>
    </interactant>
    <organismsDiffer>false</organismsDiffer>
    <experiments>3</experiments>
</comment>
<comment type="interaction">
    <interactant intactId="EBI-10220600">
        <id>Q8NA54</id>
    </interactant>
    <interactant intactId="EBI-1244971">
        <id>Q15669</id>
        <label>RHOH</label>
    </interactant>
    <organismsDiffer>false</organismsDiffer>
    <experiments>3</experiments>
</comment>
<comment type="interaction">
    <interactant intactId="EBI-10220600">
        <id>Q8NA54</id>
    </interactant>
    <interactant intactId="EBI-396669">
        <id>Q9Y3C5</id>
        <label>RNF11</label>
    </interactant>
    <organismsDiffer>false</organismsDiffer>
    <experiments>3</experiments>
</comment>
<comment type="interaction">
    <interactant intactId="EBI-10220600">
        <id>Q8NA54</id>
    </interactant>
    <interactant intactId="EBI-3957636">
        <id>Q8IYX7</id>
        <label>SAXO1</label>
    </interactant>
    <organismsDiffer>false</organismsDiffer>
    <experiments>3</experiments>
</comment>
<comment type="interaction">
    <interactant intactId="EBI-10220600">
        <id>Q8NA54</id>
    </interactant>
    <interactant intactId="EBI-395421">
        <id>Q16637</id>
        <label>SMN2</label>
    </interactant>
    <organismsDiffer>false</organismsDiffer>
    <experiments>6</experiments>
</comment>
<comment type="interaction">
    <interactant intactId="EBI-10220600">
        <id>Q8NA54</id>
    </interactant>
    <interactant intactId="EBI-741237">
        <id>O60504</id>
        <label>SORBS3</label>
    </interactant>
    <organismsDiffer>false</organismsDiffer>
    <experiments>3</experiments>
</comment>
<comment type="interaction">
    <interactant intactId="EBI-10220600">
        <id>Q8NA54</id>
    </interactant>
    <interactant intactId="EBI-5235340">
        <id>Q7Z699</id>
        <label>SPRED1</label>
    </interactant>
    <organismsDiffer>false</organismsDiffer>
    <experiments>6</experiments>
</comment>
<comment type="interaction">
    <interactant intactId="EBI-10220600">
        <id>Q8NA54</id>
    </interactant>
    <interactant intactId="EBI-6872807">
        <id>Q8N0S2</id>
        <label>SYCE1</label>
    </interactant>
    <organismsDiffer>false</organismsDiffer>
    <experiments>3</experiments>
</comment>
<comment type="interaction">
    <interactant intactId="EBI-10220600">
        <id>Q8NA54</id>
    </interactant>
    <interactant intactId="EBI-25847109">
        <id>O14656-2</id>
        <label>TOR1A</label>
    </interactant>
    <organismsDiffer>false</organismsDiffer>
    <experiments>3</experiments>
</comment>
<comment type="interaction">
    <interactant intactId="EBI-10220600">
        <id>Q8NA54</id>
    </interactant>
    <interactant intactId="EBI-11952721">
        <id>Q05BL1</id>
        <label>TP53BP2</label>
    </interactant>
    <organismsDiffer>false</organismsDiffer>
    <experiments>3</experiments>
</comment>
<comment type="interaction">
    <interactant intactId="EBI-10220600">
        <id>Q8NA54</id>
    </interactant>
    <interactant intactId="EBI-355744">
        <id>Q12933</id>
        <label>TRAF2</label>
    </interactant>
    <organismsDiffer>false</organismsDiffer>
    <experiments>3</experiments>
</comment>
<comment type="interaction">
    <interactant intactId="EBI-10220600">
        <id>Q8NA54</id>
    </interactant>
    <interactant intactId="EBI-359276">
        <id>Q9Y4K3</id>
        <label>TRAF6</label>
    </interactant>
    <organismsDiffer>false</organismsDiffer>
    <experiments>3</experiments>
</comment>
<comment type="interaction">
    <interactant intactId="EBI-10220600">
        <id>Q8NA54</id>
    </interactant>
    <interactant intactId="EBI-740098">
        <id>P36406</id>
        <label>TRIM23</label>
    </interactant>
    <organismsDiffer>false</organismsDiffer>
    <experiments>7</experiments>
</comment>
<comment type="interaction">
    <interactant intactId="EBI-10220600">
        <id>Q8NA54</id>
    </interactant>
    <interactant intactId="EBI-719493">
        <id>P14373</id>
        <label>TRIM27</label>
    </interactant>
    <organismsDiffer>false</organismsDiffer>
    <experiments>3</experiments>
</comment>
<comment type="interaction">
    <interactant intactId="EBI-10220600">
        <id>Q8NA54</id>
    </interactant>
    <interactant intactId="EBI-5235829">
        <id>Q8IWZ5</id>
        <label>TRIM42</label>
    </interactant>
    <organismsDiffer>false</organismsDiffer>
    <experiments>3</experiments>
</comment>
<comment type="interaction">
    <interactant intactId="EBI-10220600">
        <id>Q8NA54</id>
    </interactant>
    <interactant intactId="EBI-9867283">
        <id>Q86XT4</id>
        <label>TRIM50</label>
    </interactant>
    <organismsDiffer>false</organismsDiffer>
    <experiments>3</experiments>
</comment>
<comment type="interaction">
    <interactant intactId="EBI-10220600">
        <id>Q8NA54</id>
    </interactant>
    <interactant intactId="EBI-2130429">
        <id>Q9BYV2</id>
        <label>TRIM54</label>
    </interactant>
    <organismsDiffer>false</organismsDiffer>
    <experiments>4</experiments>
</comment>
<comment type="interaction">
    <interactant intactId="EBI-10220600">
        <id>Q8NA54</id>
    </interactant>
    <interactant intactId="EBI-720609">
        <id>O76024</id>
        <label>WFS1</label>
    </interactant>
    <organismsDiffer>false</organismsDiffer>
    <experiments>3</experiments>
</comment>
<comment type="interaction">
    <interactant intactId="EBI-10220600">
        <id>Q8NA54</id>
    </interactant>
    <interactant intactId="EBI-2849334">
        <id>P52747</id>
        <label>ZNF143</label>
    </interactant>
    <organismsDiffer>false</organismsDiffer>
    <experiments>3</experiments>
</comment>
<comment type="interaction">
    <interactant intactId="EBI-10220600">
        <id>Q8NA54</id>
    </interactant>
    <interactant intactId="EBI-11741890">
        <id>Q86VK4-3</id>
        <label>ZNF410</label>
    </interactant>
    <organismsDiffer>false</organismsDiffer>
    <experiments>3</experiments>
</comment>
<comment type="interaction">
    <interactant intactId="EBI-10220600">
        <id>Q8NA54</id>
    </interactant>
    <interactant intactId="EBI-11035148">
        <id>Q8TF50</id>
        <label>ZNF526</label>
    </interactant>
    <organismsDiffer>false</organismsDiffer>
    <experiments>3</experiments>
</comment>
<comment type="interaction">
    <interactant intactId="EBI-10220600">
        <id>Q8NA54</id>
    </interactant>
    <interactant intactId="EBI-527853">
        <id>Q9UGI0</id>
        <label>ZRANB1</label>
    </interactant>
    <organismsDiffer>false</organismsDiffer>
    <experiments>3</experiments>
</comment>
<comment type="subcellular location">
    <subcellularLocation>
        <location evidence="1">Cytoplasm</location>
        <location evidence="1">Cytoskeleton</location>
        <location evidence="1">Flagellum axoneme</location>
    </subcellularLocation>
    <subcellularLocation>
        <location evidence="1">Cell projection</location>
        <location evidence="1">Cilium</location>
    </subcellularLocation>
    <text evidence="1">Localizes to the axoneme of sperm cells and the cilia of tracheal epithelial cells.</text>
</comment>
<comment type="alternative products">
    <event type="alternative splicing"/>
    <isoform>
        <id>Q8NA54-1</id>
        <name>1</name>
        <sequence type="displayed"/>
    </isoform>
    <isoform>
        <id>Q8NA54-2</id>
        <name>2</name>
        <sequence type="described" ref="VSP_022830 VSP_022831"/>
    </isoform>
</comment>
<comment type="disease">
    <text evidence="7">Defects in IQUB may be the cause of spermatogenic failure with radial spoke defects, leading to asthenospermia and male infertility (PubMed:36355624). Sperm appear largely normal morphologically but with radial spoke defects, and their motility is severely reduced (PubMed:36355624).</text>
</comment>
<feature type="chain" id="PRO_0000274601" description="IQ motif and ubiquitin-like domain-containing protein">
    <location>
        <begin position="1"/>
        <end position="791"/>
    </location>
</feature>
<feature type="domain" description="Ubiquitin-like" evidence="2">
    <location>
        <begin position="131"/>
        <end position="207"/>
    </location>
</feature>
<feature type="domain" description="IQ">
    <location>
        <begin position="338"/>
        <end position="367"/>
    </location>
</feature>
<feature type="region of interest" description="Disordered" evidence="3">
    <location>
        <begin position="1"/>
        <end position="73"/>
    </location>
</feature>
<feature type="splice variant" id="VSP_022830" description="In isoform 2." evidence="8">
    <original>VPQDPLKFYKKIYFCHSCQLYLPSTEFSVSSTSRRIYRCRNCINLQNEAQKRESFLKYKCLLQQLYYTEADYEDDSKIAFLMQLQDIQYLTENI</original>
    <variation>MGGEYLSMAL</variation>
    <location>
        <begin position="587"/>
        <end position="680"/>
    </location>
</feature>
<feature type="splice variant" id="VSP_022831" description="In isoform 2." evidence="8">
    <location>
        <begin position="681"/>
        <end position="791"/>
    </location>
</feature>
<feature type="sequence variant" id="VAR_030332" description="In dbSNP:rs10255061." evidence="4">
    <original>V</original>
    <variation>M</variation>
    <location>
        <position position="126"/>
    </location>
</feature>
<feature type="sequence variant" id="VAR_087798" description="Found in a patient with spermatogenic failure with radial spoke defects; binding to RSPH3 and calmodulin is abrogated; dbSNP:rs1418690066." evidence="7">
    <location>
        <begin position="314"/>
        <end position="791"/>
    </location>
</feature>
<feature type="sequence variant" id="VAR_030333" description="In dbSNP:rs17146009.">
    <original>D</original>
    <variation>N</variation>
    <location>
        <position position="691"/>
    </location>
</feature>
<feature type="sequence variant" id="VAR_036291" description="In a colorectal cancer sample; somatic mutation; dbSNP:rs1525626." evidence="5">
    <original>R</original>
    <variation>H</variation>
    <location>
        <position position="735"/>
    </location>
</feature>
<feature type="sequence variant" id="VAR_030334" description="In dbSNP:rs1525626.">
    <original>R</original>
    <variation>P</variation>
    <location>
        <position position="735"/>
    </location>
</feature>
<feature type="sequence conflict" description="In Ref. 1; BAC04074." evidence="9" ref="1">
    <original>Q</original>
    <variation>R</variation>
    <location>
        <position position="4"/>
    </location>
</feature>
<feature type="sequence conflict" description="In Ref. 1; BAC04074." evidence="9" ref="1">
    <original>F</original>
    <variation>S</variation>
    <location>
        <position position="252"/>
    </location>
</feature>
<feature type="sequence conflict" description="In Ref. 1; BAC04074." evidence="9" ref="1">
    <original>I</original>
    <variation>T</variation>
    <location>
        <position position="343"/>
    </location>
</feature>
<feature type="strand" evidence="10">
    <location>
        <begin position="131"/>
        <end position="137"/>
    </location>
</feature>
<feature type="turn" evidence="10">
    <location>
        <begin position="138"/>
        <end position="140"/>
    </location>
</feature>
<feature type="strand" evidence="10">
    <location>
        <begin position="143"/>
        <end position="148"/>
    </location>
</feature>
<feature type="strand" evidence="10">
    <location>
        <begin position="150"/>
        <end position="152"/>
    </location>
</feature>
<feature type="helix" evidence="10">
    <location>
        <begin position="154"/>
        <end position="165"/>
    </location>
</feature>
<feature type="turn" evidence="10">
    <location>
        <begin position="169"/>
        <end position="171"/>
    </location>
</feature>
<feature type="strand" evidence="10">
    <location>
        <begin position="172"/>
        <end position="176"/>
    </location>
</feature>
<feature type="strand" evidence="10">
    <location>
        <begin position="179"/>
        <end position="181"/>
    </location>
</feature>
<feature type="helix" evidence="10">
    <location>
        <begin position="187"/>
        <end position="190"/>
    </location>
</feature>
<feature type="strand" evidence="10">
    <location>
        <begin position="197"/>
        <end position="205"/>
    </location>
</feature>
<feature type="turn" evidence="10">
    <location>
        <begin position="207"/>
        <end position="209"/>
    </location>
</feature>
<name>IQUB_HUMAN</name>
<sequence>MSNQQEKYEAQNIVNSTEESDDAFDTVTIPVPSEEPQESDQTEEHESGIEQFSESHAIHVEEQSDQSFSSLEPDNEQLMEEVISPRQVSYTPQHHEKQYAMQRPNDDSLAFLDKIKSVKESLQESVEDSLATVKVVLIPVGQEIVIPFKVDTILKYLKDHFSHLLGIPHSVLQIRYSGKILKNNETLVQHGVKPQEIVQVEIFSTNPDLYPVRRIDGLTDVSQIITVTVQTGLDQYQQVPVEIVKSDFHKPFLGGFRHKVTGVEYHNAGTQTVPKRIPERLSIFCRDTQTVFQKKNLQQTTNTTSTQMTNIGVYVSNMTDKLVTPGKYFSAAEYHAQRLKAVIVIQTYYRQWHAKIFVENLRRQKSLRLEWETQQELRKIREKEEWIKLDYHRRHNPKTNEDFEFLYNALEFWRQEELTRINQSFTGAERKAALCELLEKETQIIASIGRHRYIAYMANQEAAIQAFLDKCSAPKIWRTPNGKTIEMDTQFTIRARELQNIYKCIMLKNISQDERLDVLLTLKHTVKEHECKLTQEILELIDREVDLMMRGVKHHNLEGLRKRIATLFFHYIKTPLFNPEVAKYLKVPQDPLKFYKKIYFCHSCQLYLPSTEFSVSSTSRRIYRCRNCINLQNEAQKRESFLKYKCLLQQLYYTEADYEDDSKIAFLMQLQDIQYLTENIWASQSVLSACDNLSDLVMVRWNKSLEWSPWNCILLTKDEAAAHLKLTSIEEGYERSFIHKIKHKHILAKNYFSQVPVLASFILDDGEIDEIRWKYHSDTTPKIIESQRPPH</sequence>
<keyword id="KW-0002">3D-structure</keyword>
<keyword id="KW-0025">Alternative splicing</keyword>
<keyword id="KW-0966">Cell projection</keyword>
<keyword id="KW-0969">Cilium</keyword>
<keyword id="KW-0970">Cilium biogenesis/degradation</keyword>
<keyword id="KW-0963">Cytoplasm</keyword>
<keyword id="KW-0206">Cytoskeleton</keyword>
<keyword id="KW-0225">Disease variant</keyword>
<keyword id="KW-0282">Flagellum</keyword>
<keyword id="KW-1267">Proteomics identification</keyword>
<keyword id="KW-1185">Reference proteome</keyword>
<gene>
    <name type="primary">IQUB</name>
</gene>
<evidence type="ECO:0000250" key="1">
    <source>
        <dbReference type="UniProtKB" id="Q8CDK3"/>
    </source>
</evidence>
<evidence type="ECO:0000255" key="2">
    <source>
        <dbReference type="PROSITE-ProRule" id="PRU00214"/>
    </source>
</evidence>
<evidence type="ECO:0000256" key="3">
    <source>
        <dbReference type="SAM" id="MobiDB-lite"/>
    </source>
</evidence>
<evidence type="ECO:0000269" key="4">
    <source>
    </source>
</evidence>
<evidence type="ECO:0000269" key="5">
    <source>
    </source>
</evidence>
<evidence type="ECO:0000269" key="6">
    <source>
    </source>
</evidence>
<evidence type="ECO:0000269" key="7">
    <source>
    </source>
</evidence>
<evidence type="ECO:0000303" key="8">
    <source>
    </source>
</evidence>
<evidence type="ECO:0000305" key="9"/>
<evidence type="ECO:0007829" key="10">
    <source>
        <dbReference type="PDB" id="2DAF"/>
    </source>
</evidence>
<organism>
    <name type="scientific">Homo sapiens</name>
    <name type="common">Human</name>
    <dbReference type="NCBI Taxonomy" id="9606"/>
    <lineage>
        <taxon>Eukaryota</taxon>
        <taxon>Metazoa</taxon>
        <taxon>Chordata</taxon>
        <taxon>Craniata</taxon>
        <taxon>Vertebrata</taxon>
        <taxon>Euteleostomi</taxon>
        <taxon>Mammalia</taxon>
        <taxon>Eutheria</taxon>
        <taxon>Euarchontoglires</taxon>
        <taxon>Primates</taxon>
        <taxon>Haplorrhini</taxon>
        <taxon>Catarrhini</taxon>
        <taxon>Hominidae</taxon>
        <taxon>Homo</taxon>
    </lineage>
</organism>
<dbReference type="EMBL" id="AK093153">
    <property type="protein sequence ID" value="BAC04074.1"/>
    <property type="molecule type" value="mRNA"/>
</dbReference>
<dbReference type="EMBL" id="AK093393">
    <property type="protein sequence ID" value="BAC04153.1"/>
    <property type="molecule type" value="mRNA"/>
</dbReference>
<dbReference type="EMBL" id="CH236947">
    <property type="protein sequence ID" value="EAL24336.1"/>
    <property type="molecule type" value="Genomic_DNA"/>
</dbReference>
<dbReference type="EMBL" id="BC026173">
    <property type="protein sequence ID" value="AAH26173.1"/>
    <property type="molecule type" value="mRNA"/>
</dbReference>
<dbReference type="EMBL" id="BC036121">
    <property type="protein sequence ID" value="AAH36121.1"/>
    <property type="molecule type" value="mRNA"/>
</dbReference>
<dbReference type="EMBL" id="BC091520">
    <property type="protein sequence ID" value="AAH91520.1"/>
    <property type="molecule type" value="mRNA"/>
</dbReference>
<dbReference type="EMBL" id="BC128181">
    <property type="protein sequence ID" value="AAI28182.1"/>
    <property type="molecule type" value="mRNA"/>
</dbReference>
<dbReference type="CCDS" id="CCDS5787.1">
    <molecule id="Q8NA54-1"/>
</dbReference>
<dbReference type="RefSeq" id="NP_001269784.1">
    <molecule id="Q8NA54-1"/>
    <property type="nucleotide sequence ID" value="NM_001282855.2"/>
</dbReference>
<dbReference type="RefSeq" id="NP_001308222.1">
    <molecule id="Q8NA54-1"/>
    <property type="nucleotide sequence ID" value="NM_001321293.2"/>
</dbReference>
<dbReference type="RefSeq" id="NP_849149.3">
    <molecule id="Q8NA54-1"/>
    <property type="nucleotide sequence ID" value="NM_178827.4"/>
</dbReference>
<dbReference type="RefSeq" id="XP_005250218.1">
    <molecule id="Q8NA54-1"/>
    <property type="nucleotide sequence ID" value="XM_005250161.4"/>
</dbReference>
<dbReference type="RefSeq" id="XP_011514135.1">
    <molecule id="Q8NA54-1"/>
    <property type="nucleotide sequence ID" value="XM_011515833.3"/>
</dbReference>
<dbReference type="RefSeq" id="XP_011514136.1">
    <molecule id="Q8NA54-1"/>
    <property type="nucleotide sequence ID" value="XM_011515834.4"/>
</dbReference>
<dbReference type="RefSeq" id="XP_016867260.1">
    <molecule id="Q8NA54-1"/>
    <property type="nucleotide sequence ID" value="XM_017011771.2"/>
</dbReference>
<dbReference type="RefSeq" id="XP_047275880.1">
    <molecule id="Q8NA54-1"/>
    <property type="nucleotide sequence ID" value="XM_047419924.1"/>
</dbReference>
<dbReference type="RefSeq" id="XP_054213321.1">
    <molecule id="Q8NA54-1"/>
    <property type="nucleotide sequence ID" value="XM_054357346.1"/>
</dbReference>
<dbReference type="RefSeq" id="XP_054213322.1">
    <molecule id="Q8NA54-1"/>
    <property type="nucleotide sequence ID" value="XM_054357347.1"/>
</dbReference>
<dbReference type="RefSeq" id="XP_054213323.1">
    <molecule id="Q8NA54-1"/>
    <property type="nucleotide sequence ID" value="XM_054357348.1"/>
</dbReference>
<dbReference type="RefSeq" id="XP_054213325.1">
    <molecule id="Q8NA54-1"/>
    <property type="nucleotide sequence ID" value="XM_054357350.1"/>
</dbReference>
<dbReference type="PDB" id="2DAF">
    <property type="method" value="NMR"/>
    <property type="chains" value="A=123-227"/>
</dbReference>
<dbReference type="PDB" id="8J07">
    <property type="method" value="EM"/>
    <property type="resolution" value="4.10 A"/>
    <property type="chains" value="c2=1-791"/>
</dbReference>
<dbReference type="PDBsum" id="2DAF"/>
<dbReference type="PDBsum" id="8J07"/>
<dbReference type="EMDB" id="EMD-35888"/>
<dbReference type="SMR" id="Q8NA54"/>
<dbReference type="BioGRID" id="127562">
    <property type="interactions" value="79"/>
</dbReference>
<dbReference type="ComplexPortal" id="CPX-8164">
    <property type="entry name" value="Radial spoke complex, flagellar variant"/>
</dbReference>
<dbReference type="CORUM" id="Q8NA54"/>
<dbReference type="FunCoup" id="Q8NA54">
    <property type="interactions" value="137"/>
</dbReference>
<dbReference type="IntAct" id="Q8NA54">
    <property type="interactions" value="93"/>
</dbReference>
<dbReference type="MINT" id="Q8NA54"/>
<dbReference type="STRING" id="9606.ENSP00000417769"/>
<dbReference type="iPTMnet" id="Q8NA54"/>
<dbReference type="PhosphoSitePlus" id="Q8NA54"/>
<dbReference type="BioMuta" id="IQUB"/>
<dbReference type="DMDM" id="125950212"/>
<dbReference type="MassIVE" id="Q8NA54"/>
<dbReference type="PaxDb" id="9606-ENSP00000417769"/>
<dbReference type="PeptideAtlas" id="Q8NA54"/>
<dbReference type="ProteomicsDB" id="72638">
    <molecule id="Q8NA54-1"/>
</dbReference>
<dbReference type="ProteomicsDB" id="72639">
    <molecule id="Q8NA54-2"/>
</dbReference>
<dbReference type="Antibodypedia" id="17626">
    <property type="antibodies" value="21 antibodies from 9 providers"/>
</dbReference>
<dbReference type="DNASU" id="154865"/>
<dbReference type="Ensembl" id="ENST00000324698.11">
    <molecule id="Q8NA54-1"/>
    <property type="protein sequence ID" value="ENSP00000324882.6"/>
    <property type="gene ID" value="ENSG00000164675.11"/>
</dbReference>
<dbReference type="Ensembl" id="ENST00000466202.5">
    <molecule id="Q8NA54-1"/>
    <property type="protein sequence ID" value="ENSP00000417769.1"/>
    <property type="gene ID" value="ENSG00000164675.11"/>
</dbReference>
<dbReference type="Ensembl" id="ENST00000484508.5">
    <molecule id="Q8NA54-2"/>
    <property type="protein sequence ID" value="ENSP00000417285.1"/>
    <property type="gene ID" value="ENSG00000164675.11"/>
</dbReference>
<dbReference type="GeneID" id="154865"/>
<dbReference type="KEGG" id="hsa:154865"/>
<dbReference type="MANE-Select" id="ENST00000324698.11">
    <property type="protein sequence ID" value="ENSP00000324882.6"/>
    <property type="RefSeq nucleotide sequence ID" value="NM_178827.5"/>
    <property type="RefSeq protein sequence ID" value="NP_849149.3"/>
</dbReference>
<dbReference type="UCSC" id="uc003vkn.4">
    <molecule id="Q8NA54-1"/>
    <property type="organism name" value="human"/>
</dbReference>
<dbReference type="AGR" id="HGNC:21995"/>
<dbReference type="CTD" id="154865"/>
<dbReference type="DisGeNET" id="154865"/>
<dbReference type="GeneCards" id="IQUB"/>
<dbReference type="HGNC" id="HGNC:21995">
    <property type="gene designation" value="IQUB"/>
</dbReference>
<dbReference type="HPA" id="ENSG00000164675">
    <property type="expression patterns" value="Tissue enriched (testis)"/>
</dbReference>
<dbReference type="MIM" id="620557">
    <property type="type" value="gene"/>
</dbReference>
<dbReference type="neXtProt" id="NX_Q8NA54"/>
<dbReference type="OpenTargets" id="ENSG00000164675"/>
<dbReference type="PharmGKB" id="PA162392258"/>
<dbReference type="VEuPathDB" id="HostDB:ENSG00000164675"/>
<dbReference type="eggNOG" id="ENOG502QRQT">
    <property type="taxonomic scope" value="Eukaryota"/>
</dbReference>
<dbReference type="GeneTree" id="ENSGT00390000014326"/>
<dbReference type="HOGENOM" id="CLU_014415_0_0_1"/>
<dbReference type="InParanoid" id="Q8NA54"/>
<dbReference type="OMA" id="TFAQKER"/>
<dbReference type="OrthoDB" id="10265862at2759"/>
<dbReference type="PAN-GO" id="Q8NA54">
    <property type="GO annotations" value="3 GO annotations based on evolutionary models"/>
</dbReference>
<dbReference type="PhylomeDB" id="Q8NA54"/>
<dbReference type="TreeFam" id="TF323180"/>
<dbReference type="PathwayCommons" id="Q8NA54"/>
<dbReference type="SignaLink" id="Q8NA54"/>
<dbReference type="BioGRID-ORCS" id="154865">
    <property type="hits" value="12 hits in 1143 CRISPR screens"/>
</dbReference>
<dbReference type="ChiTaRS" id="IQUB">
    <property type="organism name" value="human"/>
</dbReference>
<dbReference type="EvolutionaryTrace" id="Q8NA54"/>
<dbReference type="GenomeRNAi" id="154865"/>
<dbReference type="Pharos" id="Q8NA54">
    <property type="development level" value="Tdark"/>
</dbReference>
<dbReference type="PRO" id="PR:Q8NA54"/>
<dbReference type="Proteomes" id="UP000005640">
    <property type="component" value="Chromosome 7"/>
</dbReference>
<dbReference type="RNAct" id="Q8NA54">
    <property type="molecule type" value="protein"/>
</dbReference>
<dbReference type="Bgee" id="ENSG00000164675">
    <property type="expression patterns" value="Expressed in sperm and 101 other cell types or tissues"/>
</dbReference>
<dbReference type="ExpressionAtlas" id="Q8NA54">
    <property type="expression patterns" value="baseline and differential"/>
</dbReference>
<dbReference type="GO" id="GO:0097729">
    <property type="term" value="C:9+2 motile cilium"/>
    <property type="evidence" value="ECO:0000250"/>
    <property type="project" value="UniProtKB"/>
</dbReference>
<dbReference type="GO" id="GO:0001669">
    <property type="term" value="C:acrosomal vesicle"/>
    <property type="evidence" value="ECO:0000318"/>
    <property type="project" value="GO_Central"/>
</dbReference>
<dbReference type="GO" id="GO:0031514">
    <property type="term" value="C:motile cilium"/>
    <property type="evidence" value="ECO:0000318"/>
    <property type="project" value="GO_Central"/>
</dbReference>
<dbReference type="GO" id="GO:0001534">
    <property type="term" value="C:radial spoke"/>
    <property type="evidence" value="ECO:0000250"/>
    <property type="project" value="UniProtKB"/>
</dbReference>
<dbReference type="GO" id="GO:0036126">
    <property type="term" value="C:sperm flagellum"/>
    <property type="evidence" value="ECO:0000250"/>
    <property type="project" value="UniProtKB"/>
</dbReference>
<dbReference type="GO" id="GO:0060271">
    <property type="term" value="P:cilium assembly"/>
    <property type="evidence" value="ECO:0000318"/>
    <property type="project" value="GO_Central"/>
</dbReference>
<dbReference type="GO" id="GO:0030317">
    <property type="term" value="P:flagellated sperm motility"/>
    <property type="evidence" value="ECO:0000315"/>
    <property type="project" value="UniProtKB"/>
</dbReference>
<dbReference type="GO" id="GO:0007618">
    <property type="term" value="P:mating"/>
    <property type="evidence" value="ECO:0000315"/>
    <property type="project" value="UniProtKB"/>
</dbReference>
<dbReference type="GO" id="GO:0007224">
    <property type="term" value="P:smoothened signaling pathway"/>
    <property type="evidence" value="ECO:0007669"/>
    <property type="project" value="Ensembl"/>
</dbReference>
<dbReference type="CDD" id="cd17061">
    <property type="entry name" value="Ubl_IQUB"/>
    <property type="match status" value="1"/>
</dbReference>
<dbReference type="Gene3D" id="3.10.20.90">
    <property type="entry name" value="Phosphatidylinositol 3-kinase Catalytic Subunit, Chain A, domain 1"/>
    <property type="match status" value="1"/>
</dbReference>
<dbReference type="InterPro" id="IPR037695">
    <property type="entry name" value="IQUB"/>
</dbReference>
<dbReference type="InterPro" id="IPR000626">
    <property type="entry name" value="Ubiquitin-like_dom"/>
</dbReference>
<dbReference type="InterPro" id="IPR029071">
    <property type="entry name" value="Ubiquitin-like_domsf"/>
</dbReference>
<dbReference type="PANTHER" id="PTHR21074">
    <property type="entry name" value="IQ AND UBIQUITIN-LIKE DOMAIN-CONTAINING PROTEIN"/>
    <property type="match status" value="1"/>
</dbReference>
<dbReference type="PANTHER" id="PTHR21074:SF0">
    <property type="entry name" value="IQ AND UBIQUITIN-LIKE DOMAIN-CONTAINING PROTEIN"/>
    <property type="match status" value="1"/>
</dbReference>
<dbReference type="Pfam" id="PF00240">
    <property type="entry name" value="ubiquitin"/>
    <property type="match status" value="1"/>
</dbReference>
<dbReference type="SUPFAM" id="SSF54236">
    <property type="entry name" value="Ubiquitin-like"/>
    <property type="match status" value="1"/>
</dbReference>
<dbReference type="PROSITE" id="PS50053">
    <property type="entry name" value="UBIQUITIN_2"/>
    <property type="match status" value="1"/>
</dbReference>